<name>Y365_WIGBR</name>
<keyword id="KW-1003">Cell membrane</keyword>
<keyword id="KW-0472">Membrane</keyword>
<keyword id="KW-1185">Reference proteome</keyword>
<keyword id="KW-0812">Transmembrane</keyword>
<keyword id="KW-1133">Transmembrane helix</keyword>
<accession>Q8D2I9</accession>
<dbReference type="EMBL" id="BA000021">
    <property type="protein sequence ID" value="BAC24511.1"/>
    <property type="molecule type" value="Genomic_DNA"/>
</dbReference>
<dbReference type="STRING" id="36870.gene:10368865"/>
<dbReference type="KEGG" id="wbr:yciC"/>
<dbReference type="eggNOG" id="ENOG502Z96Y">
    <property type="taxonomic scope" value="Bacteria"/>
</dbReference>
<dbReference type="HOGENOM" id="CLU_073287_0_0_6"/>
<dbReference type="OrthoDB" id="6454524at2"/>
<dbReference type="Proteomes" id="UP000000562">
    <property type="component" value="Chromosome"/>
</dbReference>
<dbReference type="GO" id="GO:0005886">
    <property type="term" value="C:plasma membrane"/>
    <property type="evidence" value="ECO:0007669"/>
    <property type="project" value="UniProtKB-SubCell"/>
</dbReference>
<dbReference type="HAMAP" id="MF_01067">
    <property type="entry name" value="UPF0259"/>
    <property type="match status" value="1"/>
</dbReference>
<dbReference type="InterPro" id="IPR009627">
    <property type="entry name" value="UPF0259"/>
</dbReference>
<dbReference type="NCBIfam" id="NF002774">
    <property type="entry name" value="PRK02868.1"/>
    <property type="match status" value="1"/>
</dbReference>
<dbReference type="Pfam" id="PF06790">
    <property type="entry name" value="UPF0259"/>
    <property type="match status" value="1"/>
</dbReference>
<protein>
    <recommendedName>
        <fullName evidence="1">UPF0259 membrane protein WIGBR3650</fullName>
    </recommendedName>
</protein>
<reference key="1">
    <citation type="journal article" date="2002" name="Nat. Genet.">
        <title>Genome sequence of the endocellular obligate symbiont of tsetse flies, Wigglesworthia glossinidia.</title>
        <authorList>
            <person name="Akman L."/>
            <person name="Yamashita A."/>
            <person name="Watanabe H."/>
            <person name="Oshima K."/>
            <person name="Shiba T."/>
            <person name="Hattori M."/>
            <person name="Aksoy S."/>
        </authorList>
    </citation>
    <scope>NUCLEOTIDE SEQUENCE [LARGE SCALE GENOMIC DNA]</scope>
</reference>
<organism>
    <name type="scientific">Wigglesworthia glossinidia brevipalpis</name>
    <dbReference type="NCBI Taxonomy" id="36870"/>
    <lineage>
        <taxon>Bacteria</taxon>
        <taxon>Pseudomonadati</taxon>
        <taxon>Pseudomonadota</taxon>
        <taxon>Gammaproteobacteria</taxon>
        <taxon>Enterobacterales</taxon>
        <taxon>Erwiniaceae</taxon>
        <taxon>Wigglesworthia</taxon>
    </lineage>
</organism>
<proteinExistence type="inferred from homology"/>
<sequence>MSISIKNLILDAWNFFVNQIINIIFFSTISAIISSLINYIFLPNRDELFTLANLISDFNGSINNINYLFQKMSIEQKYILFKLSLSNHLSSLVGNAFLFSNIITMINTICDKKRFFNIFNNIILSSSLIPKFLTLIFLISFLTQCGMALMLIPGIIVLIFLSFSPILITKKNISITDSIKISVNITFKNIKTVAPIIFLWLLIKLIILVISSQISINGFLSSVKIFFYLINNIITVYIIIYMYRLYLLSKIKKNKYL</sequence>
<feature type="chain" id="PRO_0000206521" description="UPF0259 membrane protein WIGBR3650">
    <location>
        <begin position="1"/>
        <end position="257"/>
    </location>
</feature>
<feature type="transmembrane region" description="Helical" evidence="1">
    <location>
        <begin position="23"/>
        <end position="43"/>
    </location>
</feature>
<feature type="transmembrane region" description="Helical" evidence="1">
    <location>
        <begin position="89"/>
        <end position="109"/>
    </location>
</feature>
<feature type="transmembrane region" description="Helical" evidence="1">
    <location>
        <begin position="122"/>
        <end position="142"/>
    </location>
</feature>
<feature type="transmembrane region" description="Helical" evidence="1">
    <location>
        <begin position="148"/>
        <end position="168"/>
    </location>
</feature>
<feature type="transmembrane region" description="Helical" evidence="1">
    <location>
        <begin position="190"/>
        <end position="210"/>
    </location>
</feature>
<feature type="transmembrane region" description="Helical" evidence="1">
    <location>
        <begin position="223"/>
        <end position="243"/>
    </location>
</feature>
<comment type="subcellular location">
    <subcellularLocation>
        <location evidence="1">Cell membrane</location>
        <topology evidence="1">Multi-pass membrane protein</topology>
    </subcellularLocation>
</comment>
<comment type="similarity">
    <text evidence="1">Belongs to the UPF0259 family.</text>
</comment>
<gene>
    <name type="ordered locus">WIGBR3650</name>
</gene>
<evidence type="ECO:0000255" key="1">
    <source>
        <dbReference type="HAMAP-Rule" id="MF_01067"/>
    </source>
</evidence>